<keyword id="KW-0574">Periplasm</keyword>
<keyword id="KW-0732">Signal</keyword>
<organism>
    <name type="scientific">Chlamydia pneumoniae</name>
    <name type="common">Chlamydophila pneumoniae</name>
    <dbReference type="NCBI Taxonomy" id="83558"/>
    <lineage>
        <taxon>Bacteria</taxon>
        <taxon>Pseudomonadati</taxon>
        <taxon>Chlamydiota</taxon>
        <taxon>Chlamydiia</taxon>
        <taxon>Chlamydiales</taxon>
        <taxon>Chlamydiaceae</taxon>
        <taxon>Chlamydia/Chlamydophila group</taxon>
        <taxon>Chlamydia</taxon>
    </lineage>
</organism>
<comment type="subcellular location">
    <subcellularLocation>
        <location evidence="1">Periplasm</location>
    </subcellularLocation>
</comment>
<comment type="similarity">
    <text evidence="3">Belongs to the TolB family.</text>
</comment>
<evidence type="ECO:0000250" key="1">
    <source>
        <dbReference type="UniProtKB" id="P0A855"/>
    </source>
</evidence>
<evidence type="ECO:0000255" key="2"/>
<evidence type="ECO:0000305" key="3"/>
<reference key="1">
    <citation type="journal article" date="1999" name="Nat. Genet.">
        <title>Comparative genomes of Chlamydia pneumoniae and C. trachomatis.</title>
        <authorList>
            <person name="Kalman S."/>
            <person name="Mitchell W.P."/>
            <person name="Marathe R."/>
            <person name="Lammel C.J."/>
            <person name="Fan J."/>
            <person name="Hyman R.W."/>
            <person name="Olinger L."/>
            <person name="Grimwood J."/>
            <person name="Davis R.W."/>
            <person name="Stephens R.S."/>
        </authorList>
    </citation>
    <scope>NUCLEOTIDE SEQUENCE [LARGE SCALE GENOMIC DNA]</scope>
    <source>
        <strain>CWL029</strain>
    </source>
</reference>
<reference key="2">
    <citation type="journal article" date="2000" name="Nucleic Acids Res.">
        <title>Genome sequences of Chlamydia trachomatis MoPn and Chlamydia pneumoniae AR39.</title>
        <authorList>
            <person name="Read T.D."/>
            <person name="Brunham R.C."/>
            <person name="Shen C."/>
            <person name="Gill S.R."/>
            <person name="Heidelberg J.F."/>
            <person name="White O."/>
            <person name="Hickey E.K."/>
            <person name="Peterson J.D."/>
            <person name="Utterback T.R."/>
            <person name="Berry K.J."/>
            <person name="Bass S."/>
            <person name="Linher K.D."/>
            <person name="Weidman J.F."/>
            <person name="Khouri H.M."/>
            <person name="Craven B."/>
            <person name="Bowman C."/>
            <person name="Dodson R.J."/>
            <person name="Gwinn M.L."/>
            <person name="Nelson W.C."/>
            <person name="DeBoy R.T."/>
            <person name="Kolonay J.F."/>
            <person name="McClarty G."/>
            <person name="Salzberg S.L."/>
            <person name="Eisen J.A."/>
            <person name="Fraser C.M."/>
        </authorList>
    </citation>
    <scope>NUCLEOTIDE SEQUENCE [LARGE SCALE GENOMIC DNA]</scope>
    <source>
        <strain>AR39</strain>
    </source>
</reference>
<reference key="3">
    <citation type="journal article" date="2000" name="Nucleic Acids Res.">
        <title>Comparison of whole genome sequences of Chlamydia pneumoniae J138 from Japan and CWL029 from USA.</title>
        <authorList>
            <person name="Shirai M."/>
            <person name="Hirakawa H."/>
            <person name="Kimoto M."/>
            <person name="Tabuchi M."/>
            <person name="Kishi F."/>
            <person name="Ouchi K."/>
            <person name="Shiba T."/>
            <person name="Ishii K."/>
            <person name="Hattori M."/>
            <person name="Kuhara S."/>
            <person name="Nakazawa T."/>
        </authorList>
    </citation>
    <scope>NUCLEOTIDE SEQUENCE [LARGE SCALE GENOMIC DNA]</scope>
    <source>
        <strain>J138</strain>
    </source>
</reference>
<reference key="4">
    <citation type="submission" date="2002-05" db="EMBL/GenBank/DDBJ databases">
        <title>The genome sequence of Chlamydia pneumoniae TW183 and comparison with other Chlamydia strains based on whole genome sequence analysis.</title>
        <authorList>
            <person name="Geng M.M."/>
            <person name="Schuhmacher A."/>
            <person name="Muehldorfer I."/>
            <person name="Bensch K.W."/>
            <person name="Schaefer K.P."/>
            <person name="Schneider S."/>
            <person name="Pohl T."/>
            <person name="Essig A."/>
            <person name="Marre R."/>
            <person name="Melchers K."/>
        </authorList>
    </citation>
    <scope>NUCLEOTIDE SEQUENCE [LARGE SCALE GENOMIC DNA]</scope>
    <source>
        <strain>TW-183</strain>
    </source>
</reference>
<feature type="signal peptide" evidence="2">
    <location>
        <begin position="1"/>
        <end position="20"/>
    </location>
</feature>
<feature type="chain" id="PRO_0000034640" description="Protein TolB homolog">
    <location>
        <begin position="21"/>
        <end position="431"/>
    </location>
</feature>
<gene>
    <name type="primary">tolB</name>
    <name type="ordered locus">CPn_0782</name>
    <name type="ordered locus">CP_1090</name>
    <name type="ordered locus">CpB0810</name>
</gene>
<name>TOLB_CHLPN</name>
<sequence length="431" mass="47761">MLRQLCFQVFFFCFASLVYAEELEVVVRSEHITLPIEVSCQTDTKDPKIQKYLSSLTEIFCKDIALGDCLQPTAASKESSSPLAISLRLHVPQLSVVLLQSSKTPQTLCSFTISQNLSVDRQKIHHAADTVHYALTGIPGISAGKIVFALSSLGKDQKLKQGELWTTDYDGKNLAPLTTECSLSITPKWVGVGSNFPYLYVSYKYGVPKIFLGSLENTEGKKVLPLKGNQLMPTFSPRKKLLAFVADTYGNPDLFIQPFSLTSGPMGRPRRLLNENFGTQGNPSFNPEGSQLVFISNKDGRPRLYIMSLDPEPQAPRLLTKKYRNSSCPAWSPDGKKIAFCSVIKGVRQICIYDLSSGEDYQLTTSPTNKESPSWAIDSRHLVFSAGNAEESELYLISLVTKKTNKIAIGVGEKRFPSWGAFPQQPIKRTL</sequence>
<accession>Q9Z7C4</accession>
<accession>Q9JQ31</accession>
<protein>
    <recommendedName>
        <fullName evidence="3">Protein TolB homolog</fullName>
    </recommendedName>
</protein>
<proteinExistence type="inferred from homology"/>
<dbReference type="EMBL" id="AE001363">
    <property type="protein sequence ID" value="AAD18920.1"/>
    <property type="molecule type" value="Genomic_DNA"/>
</dbReference>
<dbReference type="EMBL" id="AE002161">
    <property type="protein sequence ID" value="AAF38861.1"/>
    <property type="molecule type" value="Genomic_DNA"/>
</dbReference>
<dbReference type="EMBL" id="BA000008">
    <property type="protein sequence ID" value="BAA98990.1"/>
    <property type="molecule type" value="Genomic_DNA"/>
</dbReference>
<dbReference type="EMBL" id="AE009440">
    <property type="protein sequence ID" value="AAP98739.1"/>
    <property type="molecule type" value="Genomic_DNA"/>
</dbReference>
<dbReference type="PIR" id="A72037">
    <property type="entry name" value="A72037"/>
</dbReference>
<dbReference type="PIR" id="D86588">
    <property type="entry name" value="D86588"/>
</dbReference>
<dbReference type="RefSeq" id="NP_224977.1">
    <property type="nucleotide sequence ID" value="NC_000922.1"/>
</dbReference>
<dbReference type="RefSeq" id="WP_010883419.1">
    <property type="nucleotide sequence ID" value="NZ_LN847257.1"/>
</dbReference>
<dbReference type="SMR" id="Q9Z7C4"/>
<dbReference type="STRING" id="406984.CPK_ORF00188"/>
<dbReference type="GeneID" id="45050838"/>
<dbReference type="KEGG" id="cpa:CP_1090"/>
<dbReference type="KEGG" id="cpj:tolB"/>
<dbReference type="KEGG" id="cpn:CPn_0782"/>
<dbReference type="KEGG" id="cpt:CpB0810"/>
<dbReference type="PATRIC" id="fig|115713.3.peg.859"/>
<dbReference type="eggNOG" id="COG0823">
    <property type="taxonomic scope" value="Bacteria"/>
</dbReference>
<dbReference type="HOGENOM" id="CLU_635688_0_0_0"/>
<dbReference type="OMA" id="VREPSWG"/>
<dbReference type="OrthoDB" id="108903at2"/>
<dbReference type="Proteomes" id="UP000000583">
    <property type="component" value="Chromosome"/>
</dbReference>
<dbReference type="Proteomes" id="UP000000801">
    <property type="component" value="Chromosome"/>
</dbReference>
<dbReference type="GO" id="GO:0042597">
    <property type="term" value="C:periplasmic space"/>
    <property type="evidence" value="ECO:0007669"/>
    <property type="project" value="UniProtKB-SubCell"/>
</dbReference>
<dbReference type="Gene3D" id="2.120.10.30">
    <property type="entry name" value="TolB, C-terminal domain"/>
    <property type="match status" value="1"/>
</dbReference>
<dbReference type="InterPro" id="IPR011042">
    <property type="entry name" value="6-blade_b-propeller_TolB-like"/>
</dbReference>
<dbReference type="InterPro" id="IPR011659">
    <property type="entry name" value="PD40"/>
</dbReference>
<dbReference type="NCBIfam" id="NF002183">
    <property type="entry name" value="PRK01029.1"/>
    <property type="match status" value="1"/>
</dbReference>
<dbReference type="PANTHER" id="PTHR36842:SF1">
    <property type="entry name" value="PROTEIN TOLB"/>
    <property type="match status" value="1"/>
</dbReference>
<dbReference type="PANTHER" id="PTHR36842">
    <property type="entry name" value="PROTEIN TOLB HOMOLOG"/>
    <property type="match status" value="1"/>
</dbReference>
<dbReference type="Pfam" id="PF07676">
    <property type="entry name" value="PD40"/>
    <property type="match status" value="2"/>
</dbReference>
<dbReference type="SUPFAM" id="SSF69304">
    <property type="entry name" value="Tricorn protease N-terminal domain"/>
    <property type="match status" value="1"/>
</dbReference>